<gene>
    <name type="primary">SWM2</name>
    <name type="ORF">SCY_4790</name>
</gene>
<reference key="1">
    <citation type="journal article" date="2007" name="Proc. Natl. Acad. Sci. U.S.A.">
        <title>Genome sequencing and comparative analysis of Saccharomyces cerevisiae strain YJM789.</title>
        <authorList>
            <person name="Wei W."/>
            <person name="McCusker J.H."/>
            <person name="Hyman R.W."/>
            <person name="Jones T."/>
            <person name="Ning Y."/>
            <person name="Cao Z."/>
            <person name="Gu Z."/>
            <person name="Bruno D."/>
            <person name="Miranda M."/>
            <person name="Nguyen M."/>
            <person name="Wilhelmy J."/>
            <person name="Komp C."/>
            <person name="Tamse R."/>
            <person name="Wang X."/>
            <person name="Jia P."/>
            <person name="Luedi P."/>
            <person name="Oefner P.J."/>
            <person name="David L."/>
            <person name="Dietrich F.S."/>
            <person name="Li Y."/>
            <person name="Davis R.W."/>
            <person name="Steinmetz L.M."/>
        </authorList>
    </citation>
    <scope>NUCLEOTIDE SEQUENCE [LARGE SCALE GENOMIC DNA]</scope>
    <source>
        <strain>YJM789</strain>
    </source>
</reference>
<keyword id="KW-0539">Nucleus</keyword>
<name>SWM2_YEAS7</name>
<proteinExistence type="inferred from homology"/>
<accession>A6ZS79</accession>
<protein>
    <recommendedName>
        <fullName>Nucleolar protein SWM2</fullName>
    </recommendedName>
    <alternativeName>
        <fullName>Synthetic With MUD2-delta protein 2</fullName>
    </alternativeName>
</protein>
<comment type="subcellular location">
    <subcellularLocation>
        <location evidence="1">Nucleus</location>
        <location evidence="1">Nucleolus</location>
    </subcellularLocation>
</comment>
<comment type="similarity">
    <text evidence="2">Belongs to the SWM2 family.</text>
</comment>
<dbReference type="EMBL" id="AAFW02000067">
    <property type="protein sequence ID" value="EDN62811.1"/>
    <property type="molecule type" value="Genomic_DNA"/>
</dbReference>
<dbReference type="HOGENOM" id="CLU_147530_0_0_1"/>
<dbReference type="OrthoDB" id="5173at4893"/>
<dbReference type="Proteomes" id="UP000007060">
    <property type="component" value="Unassembled WGS sequence"/>
</dbReference>
<dbReference type="GO" id="GO:0005730">
    <property type="term" value="C:nucleolus"/>
    <property type="evidence" value="ECO:0007669"/>
    <property type="project" value="UniProtKB-SubCell"/>
</dbReference>
<dbReference type="InterPro" id="IPR031391">
    <property type="entry name" value="Swm2"/>
</dbReference>
<dbReference type="Pfam" id="PF17083">
    <property type="entry name" value="Swm2"/>
    <property type="match status" value="1"/>
</dbReference>
<sequence>MIDLYNYSNLEGLLDGLTDLNRIPKEYSAVLEPYFQNIARNAHLKSRALKICRSNFHKWNEEGAKTVNPEIIRRCLNLWYVLKGKEYKKLKDPPPADNIIKDEIDVSYVKNLNEVRLEFDEFGKLISNPLENLILEEVEVNDFIQE</sequence>
<organism>
    <name type="scientific">Saccharomyces cerevisiae (strain YJM789)</name>
    <name type="common">Baker's yeast</name>
    <dbReference type="NCBI Taxonomy" id="307796"/>
    <lineage>
        <taxon>Eukaryota</taxon>
        <taxon>Fungi</taxon>
        <taxon>Dikarya</taxon>
        <taxon>Ascomycota</taxon>
        <taxon>Saccharomycotina</taxon>
        <taxon>Saccharomycetes</taxon>
        <taxon>Saccharomycetales</taxon>
        <taxon>Saccharomycetaceae</taxon>
        <taxon>Saccharomyces</taxon>
    </lineage>
</organism>
<evidence type="ECO:0000250" key="1"/>
<evidence type="ECO:0000305" key="2"/>
<feature type="chain" id="PRO_0000405678" description="Nucleolar protein SWM2">
    <location>
        <begin position="1"/>
        <end position="146"/>
    </location>
</feature>